<proteinExistence type="inferred from homology"/>
<comment type="function">
    <text evidence="1">This protein binds specifically to 23S rRNA; its binding is stimulated by other ribosomal proteins, e.g. L4, L17, and L20. It is important during the early stages of 50S assembly. It makes multiple contacts with different domains of the 23S rRNA in the assembled 50S subunit and ribosome (By similarity).</text>
</comment>
<comment type="function">
    <text evidence="1">The globular domain of the protein is located near the polypeptide exit tunnel on the outside of the subunit, while an extended beta-hairpin is found that lines the wall of the exit tunnel in the center of the 70S ribosome.</text>
</comment>
<comment type="subunit">
    <text evidence="1">Part of the 50S ribosomal subunit.</text>
</comment>
<comment type="similarity">
    <text evidence="1">Belongs to the universal ribosomal protein uL22 family.</text>
</comment>
<organism>
    <name type="scientific">Clostridium perfringens (strain 13 / Type A)</name>
    <dbReference type="NCBI Taxonomy" id="195102"/>
    <lineage>
        <taxon>Bacteria</taxon>
        <taxon>Bacillati</taxon>
        <taxon>Bacillota</taxon>
        <taxon>Clostridia</taxon>
        <taxon>Eubacteriales</taxon>
        <taxon>Clostridiaceae</taxon>
        <taxon>Clostridium</taxon>
    </lineage>
</organism>
<feature type="chain" id="PRO_0000125143" description="Large ribosomal subunit protein uL22">
    <location>
        <begin position="1"/>
        <end position="111"/>
    </location>
</feature>
<accession>Q8XHS8</accession>
<gene>
    <name evidence="1" type="primary">rplV</name>
    <name type="ordered locus">CPE2400</name>
</gene>
<dbReference type="EMBL" id="BA000016">
    <property type="protein sequence ID" value="BAB82106.1"/>
    <property type="molecule type" value="Genomic_DNA"/>
</dbReference>
<dbReference type="RefSeq" id="WP_003454177.1">
    <property type="nucleotide sequence ID" value="NC_003366.1"/>
</dbReference>
<dbReference type="SMR" id="Q8XHS8"/>
<dbReference type="STRING" id="195102.gene:10491717"/>
<dbReference type="GeneID" id="93001014"/>
<dbReference type="KEGG" id="cpe:CPE2400"/>
<dbReference type="HOGENOM" id="CLU_083987_3_3_9"/>
<dbReference type="Proteomes" id="UP000000818">
    <property type="component" value="Chromosome"/>
</dbReference>
<dbReference type="GO" id="GO:0022625">
    <property type="term" value="C:cytosolic large ribosomal subunit"/>
    <property type="evidence" value="ECO:0007669"/>
    <property type="project" value="TreeGrafter"/>
</dbReference>
<dbReference type="GO" id="GO:0019843">
    <property type="term" value="F:rRNA binding"/>
    <property type="evidence" value="ECO:0007669"/>
    <property type="project" value="UniProtKB-UniRule"/>
</dbReference>
<dbReference type="GO" id="GO:0003735">
    <property type="term" value="F:structural constituent of ribosome"/>
    <property type="evidence" value="ECO:0007669"/>
    <property type="project" value="InterPro"/>
</dbReference>
<dbReference type="GO" id="GO:0006412">
    <property type="term" value="P:translation"/>
    <property type="evidence" value="ECO:0007669"/>
    <property type="project" value="UniProtKB-UniRule"/>
</dbReference>
<dbReference type="CDD" id="cd00336">
    <property type="entry name" value="Ribosomal_L22"/>
    <property type="match status" value="1"/>
</dbReference>
<dbReference type="FunFam" id="3.90.470.10:FF:000011">
    <property type="entry name" value="50S ribosomal protein L22"/>
    <property type="match status" value="1"/>
</dbReference>
<dbReference type="Gene3D" id="3.90.470.10">
    <property type="entry name" value="Ribosomal protein L22/L17"/>
    <property type="match status" value="1"/>
</dbReference>
<dbReference type="HAMAP" id="MF_01331_B">
    <property type="entry name" value="Ribosomal_uL22_B"/>
    <property type="match status" value="1"/>
</dbReference>
<dbReference type="InterPro" id="IPR001063">
    <property type="entry name" value="Ribosomal_uL22"/>
</dbReference>
<dbReference type="InterPro" id="IPR005727">
    <property type="entry name" value="Ribosomal_uL22_bac/chlpt-type"/>
</dbReference>
<dbReference type="InterPro" id="IPR047867">
    <property type="entry name" value="Ribosomal_uL22_bac/org-type"/>
</dbReference>
<dbReference type="InterPro" id="IPR036394">
    <property type="entry name" value="Ribosomal_uL22_sf"/>
</dbReference>
<dbReference type="NCBIfam" id="TIGR01044">
    <property type="entry name" value="rplV_bact"/>
    <property type="match status" value="1"/>
</dbReference>
<dbReference type="PANTHER" id="PTHR13501">
    <property type="entry name" value="CHLOROPLAST 50S RIBOSOMAL PROTEIN L22-RELATED"/>
    <property type="match status" value="1"/>
</dbReference>
<dbReference type="PANTHER" id="PTHR13501:SF8">
    <property type="entry name" value="LARGE RIBOSOMAL SUBUNIT PROTEIN UL22M"/>
    <property type="match status" value="1"/>
</dbReference>
<dbReference type="Pfam" id="PF00237">
    <property type="entry name" value="Ribosomal_L22"/>
    <property type="match status" value="1"/>
</dbReference>
<dbReference type="SUPFAM" id="SSF54843">
    <property type="entry name" value="Ribosomal protein L22"/>
    <property type="match status" value="1"/>
</dbReference>
<protein>
    <recommendedName>
        <fullName evidence="1">Large ribosomal subunit protein uL22</fullName>
    </recommendedName>
    <alternativeName>
        <fullName evidence="2">50S ribosomal protein L22</fullName>
    </alternativeName>
</protein>
<name>RL22_CLOPE</name>
<reference key="1">
    <citation type="journal article" date="2002" name="Proc. Natl. Acad. Sci. U.S.A.">
        <title>Complete genome sequence of Clostridium perfringens, an anaerobic flesh-eater.</title>
        <authorList>
            <person name="Shimizu T."/>
            <person name="Ohtani K."/>
            <person name="Hirakawa H."/>
            <person name="Ohshima K."/>
            <person name="Yamashita A."/>
            <person name="Shiba T."/>
            <person name="Ogasawara N."/>
            <person name="Hattori M."/>
            <person name="Kuhara S."/>
            <person name="Hayashi H."/>
        </authorList>
    </citation>
    <scope>NUCLEOTIDE SEQUENCE [LARGE SCALE GENOMIC DNA]</scope>
    <source>
        <strain>13 / Type A</strain>
    </source>
</reference>
<evidence type="ECO:0000255" key="1">
    <source>
        <dbReference type="HAMAP-Rule" id="MF_01331"/>
    </source>
</evidence>
<evidence type="ECO:0000305" key="2"/>
<sequence length="111" mass="12335">MEAKAIAKYVRMSPTKVGVVLDLIRGKNVNEAFAILKYTPRDAAEVISKVLKSAVANAENNHELDANRLFVAEAHVGHGPTLKRFRPMDHGKAFRINKRTSNITLVVKERA</sequence>
<keyword id="KW-1185">Reference proteome</keyword>
<keyword id="KW-0687">Ribonucleoprotein</keyword>
<keyword id="KW-0689">Ribosomal protein</keyword>
<keyword id="KW-0694">RNA-binding</keyword>
<keyword id="KW-0699">rRNA-binding</keyword>